<gene>
    <name evidence="1" type="primary">rpoA</name>
    <name type="ordered locus">Cag_1824</name>
</gene>
<feature type="chain" id="PRO_0000225266" description="DNA-directed RNA polymerase subunit alpha">
    <location>
        <begin position="1"/>
        <end position="327"/>
    </location>
</feature>
<feature type="region of interest" description="Alpha N-terminal domain (alpha-NTD)" evidence="1">
    <location>
        <begin position="1"/>
        <end position="231"/>
    </location>
</feature>
<feature type="region of interest" description="Alpha C-terminal domain (alpha-CTD)" evidence="1">
    <location>
        <begin position="247"/>
        <end position="327"/>
    </location>
</feature>
<keyword id="KW-0240">DNA-directed RNA polymerase</keyword>
<keyword id="KW-0548">Nucleotidyltransferase</keyword>
<keyword id="KW-0804">Transcription</keyword>
<keyword id="KW-0808">Transferase</keyword>
<accession>Q3APK0</accession>
<organism>
    <name type="scientific">Chlorobium chlorochromatii (strain CaD3)</name>
    <dbReference type="NCBI Taxonomy" id="340177"/>
    <lineage>
        <taxon>Bacteria</taxon>
        <taxon>Pseudomonadati</taxon>
        <taxon>Chlorobiota</taxon>
        <taxon>Chlorobiia</taxon>
        <taxon>Chlorobiales</taxon>
        <taxon>Chlorobiaceae</taxon>
        <taxon>Chlorobium/Pelodictyon group</taxon>
        <taxon>Chlorobium</taxon>
    </lineage>
</organism>
<comment type="function">
    <text evidence="1">DNA-dependent RNA polymerase catalyzes the transcription of DNA into RNA using the four ribonucleoside triphosphates as substrates.</text>
</comment>
<comment type="catalytic activity">
    <reaction evidence="1">
        <text>RNA(n) + a ribonucleoside 5'-triphosphate = RNA(n+1) + diphosphate</text>
        <dbReference type="Rhea" id="RHEA:21248"/>
        <dbReference type="Rhea" id="RHEA-COMP:14527"/>
        <dbReference type="Rhea" id="RHEA-COMP:17342"/>
        <dbReference type="ChEBI" id="CHEBI:33019"/>
        <dbReference type="ChEBI" id="CHEBI:61557"/>
        <dbReference type="ChEBI" id="CHEBI:140395"/>
        <dbReference type="EC" id="2.7.7.6"/>
    </reaction>
</comment>
<comment type="subunit">
    <text evidence="1">Homodimer. The RNAP catalytic core consists of 2 alpha, 1 beta, 1 beta' and 1 omega subunit. When a sigma factor is associated with the core the holoenzyme is formed, which can initiate transcription.</text>
</comment>
<comment type="domain">
    <text evidence="1">The N-terminal domain is essential for RNAP assembly and basal transcription, whereas the C-terminal domain is involved in interaction with transcriptional regulators and with upstream promoter elements.</text>
</comment>
<comment type="similarity">
    <text evidence="1">Belongs to the RNA polymerase alpha chain family.</text>
</comment>
<name>RPOA_CHLCH</name>
<proteinExistence type="inferred from homology"/>
<protein>
    <recommendedName>
        <fullName evidence="1">DNA-directed RNA polymerase subunit alpha</fullName>
        <shortName evidence="1">RNAP subunit alpha</shortName>
        <ecNumber evidence="1">2.7.7.6</ecNumber>
    </recommendedName>
    <alternativeName>
        <fullName evidence="1">RNA polymerase subunit alpha</fullName>
    </alternativeName>
    <alternativeName>
        <fullName evidence="1">Transcriptase subunit alpha</fullName>
    </alternativeName>
</protein>
<reference key="1">
    <citation type="submission" date="2005-08" db="EMBL/GenBank/DDBJ databases">
        <title>Complete sequence of Chlorobium chlorochromatii CaD3.</title>
        <authorList>
            <consortium name="US DOE Joint Genome Institute"/>
            <person name="Copeland A."/>
            <person name="Lucas S."/>
            <person name="Lapidus A."/>
            <person name="Barry K."/>
            <person name="Detter J.C."/>
            <person name="Glavina T."/>
            <person name="Hammon N."/>
            <person name="Israni S."/>
            <person name="Pitluck S."/>
            <person name="Bryant D."/>
            <person name="Schmutz J."/>
            <person name="Larimer F."/>
            <person name="Land M."/>
            <person name="Kyrpides N."/>
            <person name="Ivanova N."/>
            <person name="Richardson P."/>
        </authorList>
    </citation>
    <scope>NUCLEOTIDE SEQUENCE [LARGE SCALE GENOMIC DNA]</scope>
    <source>
        <strain>CaD3</strain>
    </source>
</reference>
<dbReference type="EC" id="2.7.7.6" evidence="1"/>
<dbReference type="EMBL" id="CP000108">
    <property type="protein sequence ID" value="ABB29075.1"/>
    <property type="molecule type" value="Genomic_DNA"/>
</dbReference>
<dbReference type="SMR" id="Q3APK0"/>
<dbReference type="STRING" id="340177.Cag_1824"/>
<dbReference type="KEGG" id="cch:Cag_1824"/>
<dbReference type="eggNOG" id="COG0202">
    <property type="taxonomic scope" value="Bacteria"/>
</dbReference>
<dbReference type="HOGENOM" id="CLU_053084_0_1_10"/>
<dbReference type="OrthoDB" id="9805706at2"/>
<dbReference type="GO" id="GO:0005737">
    <property type="term" value="C:cytoplasm"/>
    <property type="evidence" value="ECO:0007669"/>
    <property type="project" value="UniProtKB-ARBA"/>
</dbReference>
<dbReference type="GO" id="GO:0000428">
    <property type="term" value="C:DNA-directed RNA polymerase complex"/>
    <property type="evidence" value="ECO:0007669"/>
    <property type="project" value="UniProtKB-KW"/>
</dbReference>
<dbReference type="GO" id="GO:0003677">
    <property type="term" value="F:DNA binding"/>
    <property type="evidence" value="ECO:0007669"/>
    <property type="project" value="UniProtKB-UniRule"/>
</dbReference>
<dbReference type="GO" id="GO:0003899">
    <property type="term" value="F:DNA-directed RNA polymerase activity"/>
    <property type="evidence" value="ECO:0007669"/>
    <property type="project" value="UniProtKB-UniRule"/>
</dbReference>
<dbReference type="GO" id="GO:0046983">
    <property type="term" value="F:protein dimerization activity"/>
    <property type="evidence" value="ECO:0007669"/>
    <property type="project" value="InterPro"/>
</dbReference>
<dbReference type="GO" id="GO:0006351">
    <property type="term" value="P:DNA-templated transcription"/>
    <property type="evidence" value="ECO:0007669"/>
    <property type="project" value="UniProtKB-UniRule"/>
</dbReference>
<dbReference type="CDD" id="cd06928">
    <property type="entry name" value="RNAP_alpha_NTD"/>
    <property type="match status" value="1"/>
</dbReference>
<dbReference type="FunFam" id="2.170.120.12:FF:000001">
    <property type="entry name" value="DNA-directed RNA polymerase subunit alpha"/>
    <property type="match status" value="1"/>
</dbReference>
<dbReference type="Gene3D" id="1.10.150.20">
    <property type="entry name" value="5' to 3' exonuclease, C-terminal subdomain"/>
    <property type="match status" value="1"/>
</dbReference>
<dbReference type="Gene3D" id="2.170.120.12">
    <property type="entry name" value="DNA-directed RNA polymerase, insert domain"/>
    <property type="match status" value="1"/>
</dbReference>
<dbReference type="Gene3D" id="3.30.1360.10">
    <property type="entry name" value="RNA polymerase, RBP11-like subunit"/>
    <property type="match status" value="1"/>
</dbReference>
<dbReference type="HAMAP" id="MF_00059">
    <property type="entry name" value="RNApol_bact_RpoA"/>
    <property type="match status" value="1"/>
</dbReference>
<dbReference type="InterPro" id="IPR011262">
    <property type="entry name" value="DNA-dir_RNA_pol_insert"/>
</dbReference>
<dbReference type="InterPro" id="IPR011263">
    <property type="entry name" value="DNA-dir_RNA_pol_RpoA/D/Rpb3"/>
</dbReference>
<dbReference type="InterPro" id="IPR011773">
    <property type="entry name" value="DNA-dir_RpoA"/>
</dbReference>
<dbReference type="InterPro" id="IPR036603">
    <property type="entry name" value="RBP11-like"/>
</dbReference>
<dbReference type="InterPro" id="IPR011260">
    <property type="entry name" value="RNAP_asu_C"/>
</dbReference>
<dbReference type="InterPro" id="IPR036643">
    <property type="entry name" value="RNApol_insert_sf"/>
</dbReference>
<dbReference type="NCBIfam" id="NF003513">
    <property type="entry name" value="PRK05182.1-2"/>
    <property type="match status" value="1"/>
</dbReference>
<dbReference type="NCBIfam" id="NF003519">
    <property type="entry name" value="PRK05182.2-5"/>
    <property type="match status" value="1"/>
</dbReference>
<dbReference type="NCBIfam" id="TIGR02027">
    <property type="entry name" value="rpoA"/>
    <property type="match status" value="1"/>
</dbReference>
<dbReference type="Pfam" id="PF01000">
    <property type="entry name" value="RNA_pol_A_bac"/>
    <property type="match status" value="1"/>
</dbReference>
<dbReference type="Pfam" id="PF03118">
    <property type="entry name" value="RNA_pol_A_CTD"/>
    <property type="match status" value="1"/>
</dbReference>
<dbReference type="Pfam" id="PF01193">
    <property type="entry name" value="RNA_pol_L"/>
    <property type="match status" value="1"/>
</dbReference>
<dbReference type="SMART" id="SM00662">
    <property type="entry name" value="RPOLD"/>
    <property type="match status" value="1"/>
</dbReference>
<dbReference type="SUPFAM" id="SSF47789">
    <property type="entry name" value="C-terminal domain of RNA polymerase alpha subunit"/>
    <property type="match status" value="1"/>
</dbReference>
<dbReference type="SUPFAM" id="SSF56553">
    <property type="entry name" value="Insert subdomain of RNA polymerase alpha subunit"/>
    <property type="match status" value="1"/>
</dbReference>
<dbReference type="SUPFAM" id="SSF55257">
    <property type="entry name" value="RBP11-like subunits of RNA polymerase"/>
    <property type="match status" value="1"/>
</dbReference>
<sequence length="327" mass="37099">MIYQMQMPAKIELDESSHSDSFGKFIAQPLERGYGVTLGNLMRRVLLASLPGTAITGIKIENVYHEFSTIQGVREDVPEIVLNLKKVRFRSQCKRSCKTTVTLVGPMEFTAGVIQPQEGEFEVLNKDLHIATINAGTTVTLDIFIGRGRGYVPAEENRAEGMPLGFIPIDSIFTPIRNVKFTVENTRVGQRTDYEKMILEVETDGSITPDDSISLAGRVISDHVLLFADFSPAEEEYTEEEFKQQDDEFETMRRLLATKIEDLDLSVRSHNCLRLAEIDTLGELVSHKEDELLNYKNFGKKSLTELKEQLDKFDLKFGMDITRYQMK</sequence>
<evidence type="ECO:0000255" key="1">
    <source>
        <dbReference type="HAMAP-Rule" id="MF_00059"/>
    </source>
</evidence>